<accession>Q97W56</accession>
<proteinExistence type="inferred from homology"/>
<sequence length="212" mass="23925">MRVGIDEAGRGALIGPMIVAGVVISDTKLKFLKGIGVKDSKQLTRERREKLFDIVANTVEAFTVVKVFPYEIDNYNLNDLTYDAVSKIILSLSSFNPEIVTVDKVGDEKPVIELINKLGYKSNVVHKADVLFVEASAASIIAKVIRDNYIDELKQVYGDFGSGYPADPRTIKWLKSFYEKNPNPPPIIRRSWKILRSTAPLYYISKEGRRLW</sequence>
<keyword id="KW-0963">Cytoplasm</keyword>
<keyword id="KW-0255">Endonuclease</keyword>
<keyword id="KW-0378">Hydrolase</keyword>
<keyword id="KW-0464">Manganese</keyword>
<keyword id="KW-0479">Metal-binding</keyword>
<keyword id="KW-0540">Nuclease</keyword>
<keyword id="KW-1185">Reference proteome</keyword>
<protein>
    <recommendedName>
        <fullName evidence="1">Ribonuclease HII</fullName>
        <shortName evidence="1">RNase HII</shortName>
        <ecNumber evidence="1">3.1.26.4</ecNumber>
    </recommendedName>
</protein>
<feature type="chain" id="PRO_0000236286" description="Ribonuclease HII">
    <location>
        <begin position="1"/>
        <end position="212"/>
    </location>
</feature>
<feature type="domain" description="RNase H type-2" evidence="2">
    <location>
        <begin position="1"/>
        <end position="204"/>
    </location>
</feature>
<feature type="binding site" evidence="1">
    <location>
        <position position="6"/>
    </location>
    <ligand>
        <name>a divalent metal cation</name>
        <dbReference type="ChEBI" id="CHEBI:60240"/>
    </ligand>
</feature>
<feature type="binding site" evidence="1">
    <location>
        <position position="7"/>
    </location>
    <ligand>
        <name>a divalent metal cation</name>
        <dbReference type="ChEBI" id="CHEBI:60240"/>
    </ligand>
</feature>
<feature type="binding site" evidence="1">
    <location>
        <position position="103"/>
    </location>
    <ligand>
        <name>a divalent metal cation</name>
        <dbReference type="ChEBI" id="CHEBI:60240"/>
    </ligand>
</feature>
<name>RNH2_SACS2</name>
<organism>
    <name type="scientific">Saccharolobus solfataricus (strain ATCC 35092 / DSM 1617 / JCM 11322 / P2)</name>
    <name type="common">Sulfolobus solfataricus</name>
    <dbReference type="NCBI Taxonomy" id="273057"/>
    <lineage>
        <taxon>Archaea</taxon>
        <taxon>Thermoproteota</taxon>
        <taxon>Thermoprotei</taxon>
        <taxon>Sulfolobales</taxon>
        <taxon>Sulfolobaceae</taxon>
        <taxon>Saccharolobus</taxon>
    </lineage>
</organism>
<gene>
    <name evidence="1" type="primary">rnhB</name>
    <name type="ordered locus">SSO2384</name>
</gene>
<comment type="function">
    <text evidence="1">Endonuclease that specifically degrades the RNA of RNA-DNA hybrids.</text>
</comment>
<comment type="catalytic activity">
    <reaction evidence="1">
        <text>Endonucleolytic cleavage to 5'-phosphomonoester.</text>
        <dbReference type="EC" id="3.1.26.4"/>
    </reaction>
</comment>
<comment type="cofactor">
    <cofactor evidence="1">
        <name>Mn(2+)</name>
        <dbReference type="ChEBI" id="CHEBI:29035"/>
    </cofactor>
    <cofactor evidence="1">
        <name>Mg(2+)</name>
        <dbReference type="ChEBI" id="CHEBI:18420"/>
    </cofactor>
    <text evidence="1">Manganese or magnesium. Binds 1 divalent metal ion per monomer in the absence of substrate. May bind a second metal ion after substrate binding.</text>
</comment>
<comment type="subcellular location">
    <subcellularLocation>
        <location evidence="1">Cytoplasm</location>
    </subcellularLocation>
</comment>
<comment type="similarity">
    <text evidence="1">Belongs to the RNase HII family.</text>
</comment>
<reference key="1">
    <citation type="journal article" date="2001" name="Proc. Natl. Acad. Sci. U.S.A.">
        <title>The complete genome of the crenarchaeon Sulfolobus solfataricus P2.</title>
        <authorList>
            <person name="She Q."/>
            <person name="Singh R.K."/>
            <person name="Confalonieri F."/>
            <person name="Zivanovic Y."/>
            <person name="Allard G."/>
            <person name="Awayez M.J."/>
            <person name="Chan-Weiher C.C.-Y."/>
            <person name="Clausen I.G."/>
            <person name="Curtis B.A."/>
            <person name="De Moors A."/>
            <person name="Erauso G."/>
            <person name="Fletcher C."/>
            <person name="Gordon P.M.K."/>
            <person name="Heikamp-de Jong I."/>
            <person name="Jeffries A.C."/>
            <person name="Kozera C.J."/>
            <person name="Medina N."/>
            <person name="Peng X."/>
            <person name="Thi-Ngoc H.P."/>
            <person name="Redder P."/>
            <person name="Schenk M.E."/>
            <person name="Theriault C."/>
            <person name="Tolstrup N."/>
            <person name="Charlebois R.L."/>
            <person name="Doolittle W.F."/>
            <person name="Duguet M."/>
            <person name="Gaasterland T."/>
            <person name="Garrett R.A."/>
            <person name="Ragan M.A."/>
            <person name="Sensen C.W."/>
            <person name="Van der Oost J."/>
        </authorList>
    </citation>
    <scope>NUCLEOTIDE SEQUENCE [LARGE SCALE GENOMIC DNA]</scope>
    <source>
        <strain>ATCC 35092 / DSM 1617 / JCM 11322 / P2</strain>
    </source>
</reference>
<dbReference type="EC" id="3.1.26.4" evidence="1"/>
<dbReference type="EMBL" id="AE006641">
    <property type="protein sequence ID" value="AAK42532.1"/>
    <property type="molecule type" value="Genomic_DNA"/>
</dbReference>
<dbReference type="PIR" id="E90409">
    <property type="entry name" value="E90409"/>
</dbReference>
<dbReference type="RefSeq" id="WP_009989457.1">
    <property type="nucleotide sequence ID" value="NC_002754.1"/>
</dbReference>
<dbReference type="SMR" id="Q97W56"/>
<dbReference type="FunCoup" id="Q97W56">
    <property type="interactions" value="142"/>
</dbReference>
<dbReference type="STRING" id="273057.SSO2384"/>
<dbReference type="PaxDb" id="273057-SSO2384"/>
<dbReference type="EnsemblBacteria" id="AAK42532">
    <property type="protein sequence ID" value="AAK42532"/>
    <property type="gene ID" value="SSO2384"/>
</dbReference>
<dbReference type="GeneID" id="44128106"/>
<dbReference type="KEGG" id="sso:SSO2384"/>
<dbReference type="PATRIC" id="fig|273057.12.peg.2466"/>
<dbReference type="eggNOG" id="arCOG04121">
    <property type="taxonomic scope" value="Archaea"/>
</dbReference>
<dbReference type="HOGENOM" id="CLU_036532_0_4_2"/>
<dbReference type="InParanoid" id="Q97W56"/>
<dbReference type="PhylomeDB" id="Q97W56"/>
<dbReference type="Proteomes" id="UP000001974">
    <property type="component" value="Chromosome"/>
</dbReference>
<dbReference type="GO" id="GO:0005737">
    <property type="term" value="C:cytoplasm"/>
    <property type="evidence" value="ECO:0007669"/>
    <property type="project" value="UniProtKB-SubCell"/>
</dbReference>
<dbReference type="GO" id="GO:0032299">
    <property type="term" value="C:ribonuclease H2 complex"/>
    <property type="evidence" value="ECO:0000318"/>
    <property type="project" value="GO_Central"/>
</dbReference>
<dbReference type="GO" id="GO:0030145">
    <property type="term" value="F:manganese ion binding"/>
    <property type="evidence" value="ECO:0007669"/>
    <property type="project" value="UniProtKB-UniRule"/>
</dbReference>
<dbReference type="GO" id="GO:0003723">
    <property type="term" value="F:RNA binding"/>
    <property type="evidence" value="ECO:0007669"/>
    <property type="project" value="InterPro"/>
</dbReference>
<dbReference type="GO" id="GO:0004523">
    <property type="term" value="F:RNA-DNA hybrid ribonuclease activity"/>
    <property type="evidence" value="ECO:0000318"/>
    <property type="project" value="GO_Central"/>
</dbReference>
<dbReference type="GO" id="GO:0043137">
    <property type="term" value="P:DNA replication, removal of RNA primer"/>
    <property type="evidence" value="ECO:0000318"/>
    <property type="project" value="GO_Central"/>
</dbReference>
<dbReference type="GO" id="GO:0006298">
    <property type="term" value="P:mismatch repair"/>
    <property type="evidence" value="ECO:0000318"/>
    <property type="project" value="GO_Central"/>
</dbReference>
<dbReference type="CDD" id="cd07180">
    <property type="entry name" value="RNase_HII_archaea_like"/>
    <property type="match status" value="1"/>
</dbReference>
<dbReference type="FunFam" id="1.10.10.460:FF:000001">
    <property type="entry name" value="Ribonuclease"/>
    <property type="match status" value="1"/>
</dbReference>
<dbReference type="Gene3D" id="3.30.420.10">
    <property type="entry name" value="Ribonuclease H-like superfamily/Ribonuclease H"/>
    <property type="match status" value="1"/>
</dbReference>
<dbReference type="Gene3D" id="1.10.10.460">
    <property type="entry name" value="Ribonuclease hii. Domain 2"/>
    <property type="match status" value="1"/>
</dbReference>
<dbReference type="HAMAP" id="MF_00052_A">
    <property type="entry name" value="RNase_HII_A"/>
    <property type="match status" value="1"/>
</dbReference>
<dbReference type="InterPro" id="IPR004649">
    <property type="entry name" value="RNase_H2_suA"/>
</dbReference>
<dbReference type="InterPro" id="IPR001352">
    <property type="entry name" value="RNase_HII/HIII"/>
</dbReference>
<dbReference type="InterPro" id="IPR024567">
    <property type="entry name" value="RNase_HII/HIII_dom"/>
</dbReference>
<dbReference type="InterPro" id="IPR020787">
    <property type="entry name" value="RNase_HII_arc"/>
</dbReference>
<dbReference type="InterPro" id="IPR023160">
    <property type="entry name" value="RNase_HII_hlx-loop-hlx_cap_dom"/>
</dbReference>
<dbReference type="InterPro" id="IPR012337">
    <property type="entry name" value="RNaseH-like_sf"/>
</dbReference>
<dbReference type="InterPro" id="IPR036397">
    <property type="entry name" value="RNaseH_sf"/>
</dbReference>
<dbReference type="NCBIfam" id="TIGR00729">
    <property type="entry name" value="ribonuclease HII"/>
    <property type="match status" value="1"/>
</dbReference>
<dbReference type="PANTHER" id="PTHR10954:SF23">
    <property type="entry name" value="RIBONUCLEASE"/>
    <property type="match status" value="1"/>
</dbReference>
<dbReference type="PANTHER" id="PTHR10954">
    <property type="entry name" value="RIBONUCLEASE H2 SUBUNIT A"/>
    <property type="match status" value="1"/>
</dbReference>
<dbReference type="Pfam" id="PF01351">
    <property type="entry name" value="RNase_HII"/>
    <property type="match status" value="1"/>
</dbReference>
<dbReference type="SUPFAM" id="SSF53098">
    <property type="entry name" value="Ribonuclease H-like"/>
    <property type="match status" value="1"/>
</dbReference>
<dbReference type="PROSITE" id="PS51975">
    <property type="entry name" value="RNASE_H_2"/>
    <property type="match status" value="1"/>
</dbReference>
<evidence type="ECO:0000255" key="1">
    <source>
        <dbReference type="HAMAP-Rule" id="MF_00052"/>
    </source>
</evidence>
<evidence type="ECO:0000255" key="2">
    <source>
        <dbReference type="PROSITE-ProRule" id="PRU01319"/>
    </source>
</evidence>